<protein>
    <recommendedName>
        <fullName>Embryonic polyadenylate-binding protein 2</fullName>
        <shortName>Embryonic poly(A)-binding protein 2</shortName>
        <shortName>ePABP-2</shortName>
        <shortName>ePABP2</shortName>
    </recommendedName>
    <alternativeName>
        <fullName>Embryonic poly(A)-binding protein type II</fullName>
    </alternativeName>
    <alternativeName>
        <fullName>Poly(A)-binding protein nuclear-like 1</fullName>
    </alternativeName>
</protein>
<sequence length="278" mass="30386">MWPFPSRSLFPPPTQAWLQTVSSDPEAQGWGAWNETKEILGPEGGEGKEEKEEEEDAEEDQDGDAGFLLSLLEQENLAECPLPDQELEAIKMKVCAMEQAEGTPRPPGVQQQAEEEEGTAAGQLLSPETVGCPLSGTPEEKVEADHRSVYVGNVDYGGSAEELEAHFSRCGEVHRVTILCDKFSGHPKGYAYIEFATKGSVQAAVELDQSLFRGRVIKVLPKRTNFPGISSTDRGGLRGHPGSRGAPFPHSGLQGRPRLRPQGQNRARGKFSPWFSPY</sequence>
<organism>
    <name type="scientific">Homo sapiens</name>
    <name type="common">Human</name>
    <dbReference type="NCBI Taxonomy" id="9606"/>
    <lineage>
        <taxon>Eukaryota</taxon>
        <taxon>Metazoa</taxon>
        <taxon>Chordata</taxon>
        <taxon>Craniata</taxon>
        <taxon>Vertebrata</taxon>
        <taxon>Euteleostomi</taxon>
        <taxon>Mammalia</taxon>
        <taxon>Eutheria</taxon>
        <taxon>Euarchontoglires</taxon>
        <taxon>Primates</taxon>
        <taxon>Haplorrhini</taxon>
        <taxon>Catarrhini</taxon>
        <taxon>Hominidae</taxon>
        <taxon>Homo</taxon>
    </lineage>
</organism>
<evidence type="ECO:0000250" key="1"/>
<evidence type="ECO:0000255" key="2">
    <source>
        <dbReference type="PROSITE-ProRule" id="PRU00176"/>
    </source>
</evidence>
<evidence type="ECO:0000256" key="3">
    <source>
        <dbReference type="SAM" id="MobiDB-lite"/>
    </source>
</evidence>
<evidence type="ECO:0000269" key="4">
    <source>
    </source>
</evidence>
<evidence type="ECO:0000303" key="5">
    <source>
    </source>
</evidence>
<evidence type="ECO:0000305" key="6"/>
<keyword id="KW-0025">Alternative splicing</keyword>
<keyword id="KW-0963">Cytoplasm</keyword>
<keyword id="KW-1267">Proteomics identification</keyword>
<keyword id="KW-1185">Reference proteome</keyword>
<keyword id="KW-0694">RNA-binding</keyword>
<name>EPAB2_HUMAN</name>
<reference key="1">
    <citation type="journal article" date="2008" name="J. Assist. Reprod. Genet.">
        <title>Isolation of the human ePAB and ePABP2 cDNAs and analysis of the expression patterns.</title>
        <authorList>
            <person name="Sakugawa N."/>
            <person name="Miyamoto T."/>
            <person name="Sato H."/>
            <person name="Ishikawa M."/>
            <person name="Horikawa M."/>
            <person name="Hayashi H."/>
            <person name="Ishikawa M."/>
            <person name="Sengoku K."/>
        </authorList>
    </citation>
    <scope>NUCLEOTIDE SEQUENCE [MRNA] (ISOFORM 1)</scope>
    <scope>TISSUE SPECIFICITY</scope>
    <source>
        <tissue>Ovary</tissue>
    </source>
</reference>
<reference key="2">
    <citation type="journal article" date="2004" name="Nature">
        <title>The sequence and analysis of duplication-rich human chromosome 16.</title>
        <authorList>
            <person name="Martin J."/>
            <person name="Han C."/>
            <person name="Gordon L.A."/>
            <person name="Terry A."/>
            <person name="Prabhakar S."/>
            <person name="She X."/>
            <person name="Xie G."/>
            <person name="Hellsten U."/>
            <person name="Chan Y.M."/>
            <person name="Altherr M."/>
            <person name="Couronne O."/>
            <person name="Aerts A."/>
            <person name="Bajorek E."/>
            <person name="Black S."/>
            <person name="Blumer H."/>
            <person name="Branscomb E."/>
            <person name="Brown N.C."/>
            <person name="Bruno W.J."/>
            <person name="Buckingham J.M."/>
            <person name="Callen D.F."/>
            <person name="Campbell C.S."/>
            <person name="Campbell M.L."/>
            <person name="Campbell E.W."/>
            <person name="Caoile C."/>
            <person name="Challacombe J.F."/>
            <person name="Chasteen L.A."/>
            <person name="Chertkov O."/>
            <person name="Chi H.C."/>
            <person name="Christensen M."/>
            <person name="Clark L.M."/>
            <person name="Cohn J.D."/>
            <person name="Denys M."/>
            <person name="Detter J.C."/>
            <person name="Dickson M."/>
            <person name="Dimitrijevic-Bussod M."/>
            <person name="Escobar J."/>
            <person name="Fawcett J.J."/>
            <person name="Flowers D."/>
            <person name="Fotopulos D."/>
            <person name="Glavina T."/>
            <person name="Gomez M."/>
            <person name="Gonzales E."/>
            <person name="Goodstein D."/>
            <person name="Goodwin L.A."/>
            <person name="Grady D.L."/>
            <person name="Grigoriev I."/>
            <person name="Groza M."/>
            <person name="Hammon N."/>
            <person name="Hawkins T."/>
            <person name="Haydu L."/>
            <person name="Hildebrand C.E."/>
            <person name="Huang W."/>
            <person name="Israni S."/>
            <person name="Jett J."/>
            <person name="Jewett P.B."/>
            <person name="Kadner K."/>
            <person name="Kimball H."/>
            <person name="Kobayashi A."/>
            <person name="Krawczyk M.-C."/>
            <person name="Leyba T."/>
            <person name="Longmire J.L."/>
            <person name="Lopez F."/>
            <person name="Lou Y."/>
            <person name="Lowry S."/>
            <person name="Ludeman T."/>
            <person name="Manohar C.F."/>
            <person name="Mark G.A."/>
            <person name="McMurray K.L."/>
            <person name="Meincke L.J."/>
            <person name="Morgan J."/>
            <person name="Moyzis R.K."/>
            <person name="Mundt M.O."/>
            <person name="Munk A.C."/>
            <person name="Nandkeshwar R.D."/>
            <person name="Pitluck S."/>
            <person name="Pollard M."/>
            <person name="Predki P."/>
            <person name="Parson-Quintana B."/>
            <person name="Ramirez L."/>
            <person name="Rash S."/>
            <person name="Retterer J."/>
            <person name="Ricke D.O."/>
            <person name="Robinson D.L."/>
            <person name="Rodriguez A."/>
            <person name="Salamov A."/>
            <person name="Saunders E.H."/>
            <person name="Scott D."/>
            <person name="Shough T."/>
            <person name="Stallings R.L."/>
            <person name="Stalvey M."/>
            <person name="Sutherland R.D."/>
            <person name="Tapia R."/>
            <person name="Tesmer J.G."/>
            <person name="Thayer N."/>
            <person name="Thompson L.S."/>
            <person name="Tice H."/>
            <person name="Torney D.C."/>
            <person name="Tran-Gyamfi M."/>
            <person name="Tsai M."/>
            <person name="Ulanovsky L.E."/>
            <person name="Ustaszewska A."/>
            <person name="Vo N."/>
            <person name="White P.S."/>
            <person name="Williams A.L."/>
            <person name="Wills P.L."/>
            <person name="Wu J.-R."/>
            <person name="Wu K."/>
            <person name="Yang J."/>
            <person name="DeJong P."/>
            <person name="Bruce D."/>
            <person name="Doggett N.A."/>
            <person name="Deaven L."/>
            <person name="Schmutz J."/>
            <person name="Grimwood J."/>
            <person name="Richardson P."/>
            <person name="Rokhsar D.S."/>
            <person name="Eichler E.E."/>
            <person name="Gilna P."/>
            <person name="Lucas S.M."/>
            <person name="Myers R.M."/>
            <person name="Rubin E.M."/>
            <person name="Pennacchio L.A."/>
        </authorList>
    </citation>
    <scope>NUCLEOTIDE SEQUENCE [LARGE SCALE GENOMIC DNA]</scope>
</reference>
<reference key="3">
    <citation type="journal article" date="2004" name="Genome Res.">
        <title>The status, quality, and expansion of the NIH full-length cDNA project: the Mammalian Gene Collection (MGC).</title>
        <authorList>
            <consortium name="The MGC Project Team"/>
        </authorList>
    </citation>
    <scope>NUCLEOTIDE SEQUENCE [LARGE SCALE MRNA] (ISOFORMS 2 AND 3)</scope>
</reference>
<feature type="chain" id="PRO_0000349172" description="Embryonic polyadenylate-binding protein 2">
    <location>
        <begin position="1"/>
        <end position="278"/>
    </location>
</feature>
<feature type="domain" description="RRM" evidence="2">
    <location>
        <begin position="147"/>
        <end position="224"/>
    </location>
</feature>
<feature type="region of interest" description="Disordered" evidence="3">
    <location>
        <begin position="21"/>
        <end position="66"/>
    </location>
</feature>
<feature type="region of interest" description="Disordered" evidence="3">
    <location>
        <begin position="101"/>
        <end position="128"/>
    </location>
</feature>
<feature type="region of interest" description="Disordered" evidence="3">
    <location>
        <begin position="227"/>
        <end position="278"/>
    </location>
</feature>
<feature type="compositionally biased region" description="Basic and acidic residues" evidence="3">
    <location>
        <begin position="35"/>
        <end position="50"/>
    </location>
</feature>
<feature type="compositionally biased region" description="Acidic residues" evidence="3">
    <location>
        <begin position="51"/>
        <end position="63"/>
    </location>
</feature>
<feature type="splice variant" id="VSP_035211" description="In isoform 3." evidence="5">
    <original>V</original>
    <variation>LCLHRVCHQGLRAGRRGAGPEPLPGPGHQGAAEKNQLPWDQLHRPRGPSRTPRLQGGTLPPQRPPGQAPAQTTRAEPGPWKILTMVFTVLKGRPDFERGAGAWIRSKPLVLHPG</variation>
    <location>
        <position position="154"/>
    </location>
</feature>
<feature type="splice variant" id="VSP_035212" description="In isoform 3." evidence="5">
    <location>
        <begin position="155"/>
        <end position="278"/>
    </location>
</feature>
<feature type="splice variant" id="VSP_035213" description="In isoform 2." evidence="5">
    <original>Y</original>
    <variation>CCRKEPTSLGSAPQTAGAFEDTQAPGGHPSPTAASRAGPGSDHKGRTGPVENSHHGFHRIKGKTRF</variation>
    <location>
        <position position="190"/>
    </location>
</feature>
<feature type="splice variant" id="VSP_035214" description="In isoform 2." evidence="5">
    <location>
        <begin position="191"/>
        <end position="278"/>
    </location>
</feature>
<feature type="splice variant" id="VSP_040501" description="In isoform 4." evidence="6">
    <original>ARGKFSPWFSPY</original>
    <variation>TPAALTPLWARPLPWVVVSHVIK</variation>
    <location>
        <begin position="267"/>
        <end position="278"/>
    </location>
</feature>
<gene>
    <name type="primary">PABPN1L</name>
    <name type="synonym">EPABP2</name>
    <name type="synonym">PABPNL1</name>
</gene>
<comment type="function">
    <text evidence="1">Binds the poly(A) tail of mRNA.</text>
</comment>
<comment type="subcellular location">
    <subcellularLocation>
        <location evidence="1">Cytoplasm</location>
    </subcellularLocation>
</comment>
<comment type="alternative products">
    <event type="alternative splicing"/>
    <isoform>
        <id>A6NDY0-1</id>
        <name>1</name>
        <sequence type="displayed"/>
    </isoform>
    <isoform>
        <id>A6NDY0-2</id>
        <name>2</name>
        <sequence type="described" ref="VSP_035213 VSP_035214"/>
    </isoform>
    <isoform>
        <id>A6NDY0-4</id>
        <name>4</name>
        <sequence type="described" ref="VSP_040501"/>
    </isoform>
    <isoform>
        <id>A6NDY0-3</id>
        <name>3</name>
        <sequence type="described" ref="VSP_035211 VSP_035212"/>
    </isoform>
</comment>
<comment type="tissue specificity">
    <text evidence="4">Expressed in various adult tissues.</text>
</comment>
<accession>A6NDY0</accession>
<accession>A1L3B3</accession>
<accession>A2VDI2</accession>
<dbReference type="EMBL" id="AC092384">
    <property type="status" value="NOT_ANNOTATED_CDS"/>
    <property type="molecule type" value="Genomic_DNA"/>
</dbReference>
<dbReference type="EMBL" id="BC130001">
    <property type="protein sequence ID" value="AAI30002.1"/>
    <property type="molecule type" value="mRNA"/>
</dbReference>
<dbReference type="EMBL" id="BC130002">
    <property type="protein sequence ID" value="AAI30003.1"/>
    <property type="molecule type" value="mRNA"/>
</dbReference>
<dbReference type="CCDS" id="CCDS45547.2">
    <molecule id="A6NDY0-1"/>
</dbReference>
<dbReference type="CCDS" id="CCDS73925.1">
    <molecule id="A6NDY0-2"/>
</dbReference>
<dbReference type="RefSeq" id="NP_001073956.2">
    <molecule id="A6NDY0-1"/>
    <property type="nucleotide sequence ID" value="NM_001080487.4"/>
</dbReference>
<dbReference type="RefSeq" id="NP_001281257.1">
    <molecule id="A6NDY0-2"/>
    <property type="nucleotide sequence ID" value="NM_001294328.4"/>
</dbReference>
<dbReference type="RefSeq" id="XP_016878719.1">
    <property type="nucleotide sequence ID" value="XM_017023230.1"/>
</dbReference>
<dbReference type="RefSeq" id="XP_047290058.1">
    <molecule id="A6NDY0-1"/>
    <property type="nucleotide sequence ID" value="XM_047434102.1"/>
</dbReference>
<dbReference type="RefSeq" id="XP_047290059.1">
    <molecule id="A6NDY0-2"/>
    <property type="nucleotide sequence ID" value="XM_047434103.1"/>
</dbReference>
<dbReference type="SMR" id="A6NDY0"/>
<dbReference type="BioGRID" id="133674">
    <property type="interactions" value="37"/>
</dbReference>
<dbReference type="FunCoup" id="A6NDY0">
    <property type="interactions" value="353"/>
</dbReference>
<dbReference type="IntAct" id="A6NDY0">
    <property type="interactions" value="29"/>
</dbReference>
<dbReference type="STRING" id="9606.ENSP00000408598"/>
<dbReference type="iPTMnet" id="A6NDY0"/>
<dbReference type="PhosphoSitePlus" id="A6NDY0"/>
<dbReference type="BioMuta" id="PABPN1L"/>
<dbReference type="jPOST" id="A6NDY0"/>
<dbReference type="MassIVE" id="A6NDY0"/>
<dbReference type="PaxDb" id="9606-ENSP00000408598"/>
<dbReference type="PeptideAtlas" id="A6NDY0"/>
<dbReference type="TopDownProteomics" id="A6NDY0-3">
    <molecule id="A6NDY0-3"/>
</dbReference>
<dbReference type="Antibodypedia" id="50156">
    <property type="antibodies" value="62 antibodies from 12 providers"/>
</dbReference>
<dbReference type="DNASU" id="390748"/>
<dbReference type="Ensembl" id="ENST00000411789.6">
    <molecule id="A6NDY0-2"/>
    <property type="protein sequence ID" value="ENSP00000405259.2"/>
    <property type="gene ID" value="ENSG00000205022.9"/>
</dbReference>
<dbReference type="Ensembl" id="ENST00000419291.7">
    <molecule id="A6NDY0-1"/>
    <property type="protein sequence ID" value="ENSP00000408598.2"/>
    <property type="gene ID" value="ENSG00000205022.9"/>
</dbReference>
<dbReference type="GeneID" id="390748"/>
<dbReference type="KEGG" id="hsa:390748"/>
<dbReference type="MANE-Select" id="ENST00000419291.7">
    <property type="protein sequence ID" value="ENSP00000408598.2"/>
    <property type="RefSeq nucleotide sequence ID" value="NM_001080487.4"/>
    <property type="RefSeq protein sequence ID" value="NP_001073956.2"/>
</dbReference>
<dbReference type="UCSC" id="uc002fmi.4">
    <molecule id="A6NDY0-1"/>
    <property type="organism name" value="human"/>
</dbReference>
<dbReference type="AGR" id="HGNC:37237"/>
<dbReference type="CTD" id="390748"/>
<dbReference type="DisGeNET" id="390748"/>
<dbReference type="GeneCards" id="PABPN1L"/>
<dbReference type="HGNC" id="HGNC:37237">
    <property type="gene designation" value="PABPN1L"/>
</dbReference>
<dbReference type="HPA" id="ENSG00000205022">
    <property type="expression patterns" value="Tissue enhanced (adrenal gland, brain)"/>
</dbReference>
<dbReference type="neXtProt" id="NX_A6NDY0"/>
<dbReference type="OpenTargets" id="ENSG00000205022"/>
<dbReference type="VEuPathDB" id="HostDB:ENSG00000205022"/>
<dbReference type="eggNOG" id="KOG4209">
    <property type="taxonomic scope" value="Eukaryota"/>
</dbReference>
<dbReference type="GeneTree" id="ENSGT00940000161325"/>
<dbReference type="HOGENOM" id="CLU_012062_23_2_1"/>
<dbReference type="InParanoid" id="A6NDY0"/>
<dbReference type="OMA" id="QAEGPPW"/>
<dbReference type="OrthoDB" id="4726at2759"/>
<dbReference type="PAN-GO" id="A6NDY0">
    <property type="GO annotations" value="0 GO annotations based on evolutionary models"/>
</dbReference>
<dbReference type="PhylomeDB" id="A6NDY0"/>
<dbReference type="TreeFam" id="TF105907"/>
<dbReference type="PathwayCommons" id="A6NDY0"/>
<dbReference type="Reactome" id="R-HSA-9820841">
    <property type="pathway name" value="M-decay: degradation of maternal mRNAs by maternally stored factors"/>
</dbReference>
<dbReference type="BioGRID-ORCS" id="390748">
    <property type="hits" value="76 hits in 1134 CRISPR screens"/>
</dbReference>
<dbReference type="GenomeRNAi" id="390748"/>
<dbReference type="Pharos" id="A6NDY0">
    <property type="development level" value="Tbio"/>
</dbReference>
<dbReference type="PRO" id="PR:A6NDY0"/>
<dbReference type="Proteomes" id="UP000005640">
    <property type="component" value="Chromosome 16"/>
</dbReference>
<dbReference type="RNAct" id="A6NDY0">
    <property type="molecule type" value="protein"/>
</dbReference>
<dbReference type="Bgee" id="ENSG00000205022">
    <property type="expression patterns" value="Expressed in right hemisphere of cerebellum and 72 other cell types or tissues"/>
</dbReference>
<dbReference type="ExpressionAtlas" id="A6NDY0">
    <property type="expression patterns" value="baseline and differential"/>
</dbReference>
<dbReference type="GO" id="GO:0005737">
    <property type="term" value="C:cytoplasm"/>
    <property type="evidence" value="ECO:0007669"/>
    <property type="project" value="UniProtKB-SubCell"/>
</dbReference>
<dbReference type="GO" id="GO:0005634">
    <property type="term" value="C:nucleus"/>
    <property type="evidence" value="ECO:0000318"/>
    <property type="project" value="GO_Central"/>
</dbReference>
<dbReference type="GO" id="GO:0008143">
    <property type="term" value="F:poly(A) binding"/>
    <property type="evidence" value="ECO:0000318"/>
    <property type="project" value="GO_Central"/>
</dbReference>
<dbReference type="GO" id="GO:0160021">
    <property type="term" value="P:maternal-to-zygotic transition of gene expression"/>
    <property type="evidence" value="ECO:0007669"/>
    <property type="project" value="Ensembl"/>
</dbReference>
<dbReference type="GO" id="GO:0031397">
    <property type="term" value="P:negative regulation of protein ubiquitination"/>
    <property type="evidence" value="ECO:0007669"/>
    <property type="project" value="Ensembl"/>
</dbReference>
<dbReference type="GO" id="GO:0062026">
    <property type="term" value="P:negative regulation of SCF-dependent proteasomal ubiquitin-dependent catabolic process"/>
    <property type="evidence" value="ECO:0007669"/>
    <property type="project" value="Ensembl"/>
</dbReference>
<dbReference type="GO" id="GO:0000288">
    <property type="term" value="P:nuclear-transcribed mRNA catabolic process, deadenylation-dependent decay"/>
    <property type="evidence" value="ECO:0000318"/>
    <property type="project" value="GO_Central"/>
</dbReference>
<dbReference type="CDD" id="cd12551">
    <property type="entry name" value="RRM_II_PABPN1L"/>
    <property type="match status" value="1"/>
</dbReference>
<dbReference type="Gene3D" id="3.30.70.330">
    <property type="match status" value="1"/>
</dbReference>
<dbReference type="InterPro" id="IPR012677">
    <property type="entry name" value="Nucleotide-bd_a/b_plait_sf"/>
</dbReference>
<dbReference type="InterPro" id="IPR035979">
    <property type="entry name" value="RBD_domain_sf"/>
</dbReference>
<dbReference type="InterPro" id="IPR000504">
    <property type="entry name" value="RRM_dom"/>
</dbReference>
<dbReference type="PANTHER" id="PTHR23236:SF27">
    <property type="entry name" value="EMBRYONIC POLYADENYLATE-BINDING PROTEIN 2"/>
    <property type="match status" value="1"/>
</dbReference>
<dbReference type="PANTHER" id="PTHR23236">
    <property type="entry name" value="EUKARYOTIC TRANSLATION INITIATION FACTOR 4B/4H"/>
    <property type="match status" value="1"/>
</dbReference>
<dbReference type="Pfam" id="PF00076">
    <property type="entry name" value="RRM_1"/>
    <property type="match status" value="1"/>
</dbReference>
<dbReference type="SMART" id="SM00360">
    <property type="entry name" value="RRM"/>
    <property type="match status" value="1"/>
</dbReference>
<dbReference type="SUPFAM" id="SSF54928">
    <property type="entry name" value="RNA-binding domain, RBD"/>
    <property type="match status" value="1"/>
</dbReference>
<dbReference type="PROSITE" id="PS50102">
    <property type="entry name" value="RRM"/>
    <property type="match status" value="1"/>
</dbReference>
<proteinExistence type="evidence at protein level"/>